<feature type="signal peptide" evidence="4">
    <location>
        <begin position="1"/>
        <end position="17"/>
    </location>
</feature>
<feature type="chain" id="PRO_5001338837" description="Probable exoglucanase GH6D">
    <location>
        <begin position="18"/>
        <end position="429"/>
    </location>
</feature>
<feature type="domain" description="CBM1" evidence="6">
    <location>
        <begin position="394"/>
        <end position="429"/>
    </location>
</feature>
<feature type="region of interest" description="Disordered" evidence="8">
    <location>
        <begin position="240"/>
        <end position="261"/>
    </location>
</feature>
<feature type="region of interest" description="Disordered" evidence="8">
    <location>
        <begin position="362"/>
        <end position="390"/>
    </location>
</feature>
<feature type="compositionally biased region" description="Low complexity" evidence="8">
    <location>
        <begin position="378"/>
        <end position="390"/>
    </location>
</feature>
<feature type="active site" description="Proton donor" evidence="7">
    <location>
        <position position="115"/>
    </location>
</feature>
<feature type="active site" description="Proton donor" evidence="7">
    <location>
        <position position="162"/>
    </location>
</feature>
<feature type="binding site" evidence="3">
    <location>
        <position position="75"/>
    </location>
    <ligand>
        <name>substrate</name>
    </ligand>
</feature>
<feature type="binding site" evidence="3">
    <location>
        <position position="77"/>
    </location>
    <ligand>
        <name>substrate</name>
    </ligand>
</feature>
<feature type="binding site" evidence="3">
    <location>
        <position position="206"/>
    </location>
    <ligand>
        <name>substrate</name>
    </ligand>
</feature>
<feature type="binding site" evidence="3">
    <location>
        <position position="209"/>
    </location>
    <ligand>
        <name>substrate</name>
    </ligand>
</feature>
<feature type="binding site" evidence="3">
    <location>
        <position position="240"/>
    </location>
    <ligand>
        <name>substrate</name>
    </ligand>
</feature>
<feature type="binding site" evidence="3">
    <location>
        <position position="300"/>
    </location>
    <ligand>
        <name>substrate</name>
    </ligand>
</feature>
<feature type="binding site" evidence="3">
    <location>
        <position position="328"/>
    </location>
    <ligand>
        <name>substrate</name>
    </ligand>
</feature>
<feature type="binding site" evidence="3">
    <location>
        <position position="332"/>
    </location>
    <ligand>
        <name>substrate</name>
    </ligand>
</feature>
<feature type="glycosylation site" description="N-linked (GlcNAc...) asparagine" evidence="5">
    <location>
        <position position="237"/>
    </location>
</feature>
<proteinExistence type="inferred from homology"/>
<organism>
    <name type="scientific">Podospora anserina (strain S / ATCC MYA-4624 / DSM 980 / FGSC 10383)</name>
    <name type="common">Pleurage anserina</name>
    <dbReference type="NCBI Taxonomy" id="515849"/>
    <lineage>
        <taxon>Eukaryota</taxon>
        <taxon>Fungi</taxon>
        <taxon>Dikarya</taxon>
        <taxon>Ascomycota</taxon>
        <taxon>Pezizomycotina</taxon>
        <taxon>Sordariomycetes</taxon>
        <taxon>Sordariomycetidae</taxon>
        <taxon>Sordariales</taxon>
        <taxon>Podosporaceae</taxon>
        <taxon>Podospora</taxon>
        <taxon>Podospora anserina</taxon>
    </lineage>
</organism>
<accession>B2ADA5</accession>
<gene>
    <name evidence="9" type="primary">GH6D</name>
    <name type="ordered locus">Pa_4_550</name>
    <name type="ORF">PODANS_4_550</name>
</gene>
<protein>
    <recommendedName>
        <fullName evidence="10">Probable exoglucanase GH6D</fullName>
        <ecNumber evidence="10">3.2.1.-</ecNumber>
    </recommendedName>
</protein>
<keyword id="KW-0119">Carbohydrate metabolism</keyword>
<keyword id="KW-0136">Cellulose degradation</keyword>
<keyword id="KW-0325">Glycoprotein</keyword>
<keyword id="KW-0326">Glycosidase</keyword>
<keyword id="KW-0378">Hydrolase</keyword>
<keyword id="KW-0624">Polysaccharide degradation</keyword>
<keyword id="KW-1185">Reference proteome</keyword>
<keyword id="KW-0964">Secreted</keyword>
<keyword id="KW-0732">Signal</keyword>
<dbReference type="EC" id="3.2.1.-" evidence="10"/>
<dbReference type="EMBL" id="CU633454">
    <property type="protein sequence ID" value="CAP61420.1"/>
    <property type="molecule type" value="Genomic_DNA"/>
</dbReference>
<dbReference type="EMBL" id="FO904939">
    <property type="protein sequence ID" value="CDP27774.1"/>
    <property type="molecule type" value="Genomic_DNA"/>
</dbReference>
<dbReference type="RefSeq" id="XP_001903645.1">
    <property type="nucleotide sequence ID" value="XM_001903610.1"/>
</dbReference>
<dbReference type="SMR" id="B2ADA5"/>
<dbReference type="STRING" id="515849.B2ADA5"/>
<dbReference type="CAZy" id="CBM1">
    <property type="family name" value="Carbohydrate-Binding Module Family 1"/>
</dbReference>
<dbReference type="CAZy" id="GH6">
    <property type="family name" value="Glycoside Hydrolase Family 6"/>
</dbReference>
<dbReference type="GlyCosmos" id="B2ADA5">
    <property type="glycosylation" value="1 site, No reported glycans"/>
</dbReference>
<dbReference type="GeneID" id="6187939"/>
<dbReference type="KEGG" id="pan:PODANSg660"/>
<dbReference type="VEuPathDB" id="FungiDB:PODANS_4_550"/>
<dbReference type="eggNOG" id="ENOG502SATK">
    <property type="taxonomic scope" value="Eukaryota"/>
</dbReference>
<dbReference type="HOGENOM" id="CLU_015488_0_0_1"/>
<dbReference type="InParanoid" id="B2ADA5"/>
<dbReference type="OrthoDB" id="64893at2759"/>
<dbReference type="Proteomes" id="UP000001197">
    <property type="component" value="Chromosome 4"/>
</dbReference>
<dbReference type="GO" id="GO:0005576">
    <property type="term" value="C:extracellular region"/>
    <property type="evidence" value="ECO:0007669"/>
    <property type="project" value="UniProtKB-SubCell"/>
</dbReference>
<dbReference type="GO" id="GO:0030248">
    <property type="term" value="F:cellulose binding"/>
    <property type="evidence" value="ECO:0007669"/>
    <property type="project" value="InterPro"/>
</dbReference>
<dbReference type="GO" id="GO:0004553">
    <property type="term" value="F:hydrolase activity, hydrolyzing O-glycosyl compounds"/>
    <property type="evidence" value="ECO:0007669"/>
    <property type="project" value="InterPro"/>
</dbReference>
<dbReference type="GO" id="GO:0030245">
    <property type="term" value="P:cellulose catabolic process"/>
    <property type="evidence" value="ECO:0007669"/>
    <property type="project" value="UniProtKB-KW"/>
</dbReference>
<dbReference type="Gene3D" id="3.20.20.40">
    <property type="entry name" value="1, 4-beta cellobiohydrolase"/>
    <property type="match status" value="1"/>
</dbReference>
<dbReference type="InterPro" id="IPR016288">
    <property type="entry name" value="Beta_cellobiohydrolase"/>
</dbReference>
<dbReference type="InterPro" id="IPR036434">
    <property type="entry name" value="Beta_cellobiohydrolase_sf"/>
</dbReference>
<dbReference type="InterPro" id="IPR035971">
    <property type="entry name" value="CBD_sf"/>
</dbReference>
<dbReference type="InterPro" id="IPR000254">
    <property type="entry name" value="Cellulose-bd_dom_fun"/>
</dbReference>
<dbReference type="InterPro" id="IPR001524">
    <property type="entry name" value="Glyco_hydro_6_CS"/>
</dbReference>
<dbReference type="PANTHER" id="PTHR34876">
    <property type="match status" value="1"/>
</dbReference>
<dbReference type="PANTHER" id="PTHR34876:SF10">
    <property type="entry name" value="GLUCANASE"/>
    <property type="match status" value="1"/>
</dbReference>
<dbReference type="Pfam" id="PF00734">
    <property type="entry name" value="CBM_1"/>
    <property type="match status" value="1"/>
</dbReference>
<dbReference type="Pfam" id="PF01341">
    <property type="entry name" value="Glyco_hydro_6"/>
    <property type="match status" value="1"/>
</dbReference>
<dbReference type="PIRSF" id="PIRSF001100">
    <property type="entry name" value="Beta_cellobiohydrolase"/>
    <property type="match status" value="1"/>
</dbReference>
<dbReference type="PRINTS" id="PR00733">
    <property type="entry name" value="GLHYDRLASE6"/>
</dbReference>
<dbReference type="SMART" id="SM00236">
    <property type="entry name" value="fCBD"/>
    <property type="match status" value="1"/>
</dbReference>
<dbReference type="SUPFAM" id="SSF57180">
    <property type="entry name" value="Cellulose-binding domain"/>
    <property type="match status" value="1"/>
</dbReference>
<dbReference type="SUPFAM" id="SSF51989">
    <property type="entry name" value="Glycosyl hydrolases family 6, cellulases"/>
    <property type="match status" value="1"/>
</dbReference>
<dbReference type="PROSITE" id="PS00562">
    <property type="entry name" value="CBM1_1"/>
    <property type="match status" value="1"/>
</dbReference>
<dbReference type="PROSITE" id="PS51164">
    <property type="entry name" value="CBM1_2"/>
    <property type="match status" value="1"/>
</dbReference>
<dbReference type="PROSITE" id="PS00656">
    <property type="entry name" value="GLYCOSYL_HYDROL_F6_2"/>
    <property type="match status" value="1"/>
</dbReference>
<sequence>MRAVYAILAGLLATGSASPLEARQSGNPFVGRSLFVNPKYSESLERTRQAFLSRGDQTNAAKVQYVQNKVGTFVWISNIFLLRDIDDAIRNARAAQSRGEKPIVGLVLYNLPDRDCSAGHSSGELSLDQNGLNRYRTEYVQPFAQKLKAASDLQFAVILEPDAIGNMVTGTTAFCRNARGPQQDGIAYAIQQLQASNIHLYLDVANGGWLGWADNLKPTTILQKAGSNARIRGYSSNVSNYNPYSTNNPPPYTAGSPSADESRYATSLGNALRERGLPTNFIIDQGRVALDGARKEWGEWCNVSPAGFGQPFTTNTNNPNVDAILWVKPGGESDGTCGMSGAPQAGAWFDAYAQMLTTNAHPEIRADGGGGGSPAPGPSSTAVAPSPSATPGGNCAARWAQCGGQGWTGPTCCAQGTCQASNQWYSQCL</sequence>
<comment type="function">
    <text evidence="2">Probable exoglucanase that may play an important function in biomass degradation by catalyzing the hydrolysis of cellulose.</text>
</comment>
<comment type="subcellular location">
    <subcellularLocation>
        <location evidence="1">Secreted</location>
    </subcellularLocation>
</comment>
<comment type="similarity">
    <text evidence="10">Belongs to the glycosyl hydrolase 6 (cellulase B) family.</text>
</comment>
<reference key="1">
    <citation type="journal article" date="2008" name="Genome Biol.">
        <title>The genome sequence of the model ascomycete fungus Podospora anserina.</title>
        <authorList>
            <person name="Espagne E."/>
            <person name="Lespinet O."/>
            <person name="Malagnac F."/>
            <person name="Da Silva C."/>
            <person name="Jaillon O."/>
            <person name="Porcel B.M."/>
            <person name="Couloux A."/>
            <person name="Aury J.-M."/>
            <person name="Segurens B."/>
            <person name="Poulain J."/>
            <person name="Anthouard V."/>
            <person name="Grossetete S."/>
            <person name="Khalili H."/>
            <person name="Coppin E."/>
            <person name="Dequard-Chablat M."/>
            <person name="Picard M."/>
            <person name="Contamine V."/>
            <person name="Arnaise S."/>
            <person name="Bourdais A."/>
            <person name="Berteaux-Lecellier V."/>
            <person name="Gautheret D."/>
            <person name="de Vries R.P."/>
            <person name="Battaglia E."/>
            <person name="Coutinho P.M."/>
            <person name="Danchin E.G.J."/>
            <person name="Henrissat B."/>
            <person name="El Khoury R."/>
            <person name="Sainsard-Chanet A."/>
            <person name="Boivin A."/>
            <person name="Pinan-Lucarre B."/>
            <person name="Sellem C.H."/>
            <person name="Debuchy R."/>
            <person name="Wincker P."/>
            <person name="Weissenbach J."/>
            <person name="Silar P."/>
        </authorList>
    </citation>
    <scope>NUCLEOTIDE SEQUENCE [LARGE SCALE GENOMIC DNA]</scope>
    <source>
        <strain>S / ATCC MYA-4624 / DSM 980 / FGSC 10383</strain>
    </source>
</reference>
<reference key="2">
    <citation type="journal article" date="2014" name="Genetics">
        <title>Maintaining two mating types: Structure of the mating type locus and its role in heterokaryosis in Podospora anserina.</title>
        <authorList>
            <person name="Grognet P."/>
            <person name="Bidard F."/>
            <person name="Kuchly C."/>
            <person name="Tong L.C.H."/>
            <person name="Coppin E."/>
            <person name="Benkhali J.A."/>
            <person name="Couloux A."/>
            <person name="Wincker P."/>
            <person name="Debuchy R."/>
            <person name="Silar P."/>
        </authorList>
    </citation>
    <scope>GENOME REANNOTATION</scope>
    <source>
        <strain>S / ATCC MYA-4624 / DSM 980 / FGSC 10383</strain>
    </source>
</reference>
<reference key="3">
    <citation type="journal article" date="2013" name="Appl. Environ. Microbiol.">
        <title>Insights into exo- and endoglucanase activities of family 6 glycoside hydrolases from Podospora anserina.</title>
        <authorList>
            <person name="Poidevin L."/>
            <person name="Feliu J."/>
            <person name="Doan A."/>
            <person name="Berrin J.G."/>
            <person name="Bey M."/>
            <person name="Coutinho P.M."/>
            <person name="Henrissat B."/>
            <person name="Record E."/>
            <person name="Heiss-Blanquet S."/>
        </authorList>
    </citation>
    <scope>IDENTIFICATION</scope>
</reference>
<name>GH6D_PODAN</name>
<evidence type="ECO:0000250" key="1"/>
<evidence type="ECO:0000250" key="2">
    <source>
        <dbReference type="UniProtKB" id="B2ABX7"/>
    </source>
</evidence>
<evidence type="ECO:0000250" key="3">
    <source>
        <dbReference type="UniProtKB" id="Q9C1S9"/>
    </source>
</evidence>
<evidence type="ECO:0000255" key="4"/>
<evidence type="ECO:0000255" key="5">
    <source>
        <dbReference type="PROSITE-ProRule" id="PRU00498"/>
    </source>
</evidence>
<evidence type="ECO:0000255" key="6">
    <source>
        <dbReference type="PROSITE-ProRule" id="PRU00597"/>
    </source>
</evidence>
<evidence type="ECO:0000255" key="7">
    <source>
        <dbReference type="PROSITE-ProRule" id="PRU10057"/>
    </source>
</evidence>
<evidence type="ECO:0000256" key="8">
    <source>
        <dbReference type="SAM" id="MobiDB-lite"/>
    </source>
</evidence>
<evidence type="ECO:0000303" key="9">
    <source>
    </source>
</evidence>
<evidence type="ECO:0000305" key="10"/>